<feature type="chain" id="PRO_0000286890" description="Chaperone modulatory protein CbpM">
    <location>
        <begin position="1"/>
        <end position="101"/>
    </location>
</feature>
<gene>
    <name evidence="1" type="primary">cbpM</name>
    <name type="ordered locus">ECP_0999</name>
</gene>
<accession>Q0TJ67</accession>
<dbReference type="EMBL" id="CP000247">
    <property type="protein sequence ID" value="ABG69012.1"/>
    <property type="molecule type" value="Genomic_DNA"/>
</dbReference>
<dbReference type="RefSeq" id="WP_000024569.1">
    <property type="nucleotide sequence ID" value="NC_008253.1"/>
</dbReference>
<dbReference type="SMR" id="Q0TJ67"/>
<dbReference type="KEGG" id="ecp:ECP_0999"/>
<dbReference type="HOGENOM" id="CLU_144710_3_1_6"/>
<dbReference type="Proteomes" id="UP000009182">
    <property type="component" value="Chromosome"/>
</dbReference>
<dbReference type="FunFam" id="1.10.1660.10:FF:000006">
    <property type="entry name" value="Chaperone modulatory protein CbpM"/>
    <property type="match status" value="1"/>
</dbReference>
<dbReference type="Gene3D" id="1.10.1660.10">
    <property type="match status" value="1"/>
</dbReference>
<dbReference type="HAMAP" id="MF_01155">
    <property type="entry name" value="CbpM"/>
    <property type="match status" value="1"/>
</dbReference>
<dbReference type="InterPro" id="IPR022835">
    <property type="entry name" value="CbpM"/>
</dbReference>
<dbReference type="NCBIfam" id="NF007617">
    <property type="entry name" value="PRK10265.1"/>
    <property type="match status" value="1"/>
</dbReference>
<dbReference type="Pfam" id="PF13591">
    <property type="entry name" value="MerR_2"/>
    <property type="match status" value="1"/>
</dbReference>
<protein>
    <recommendedName>
        <fullName evidence="1">Chaperone modulatory protein CbpM</fullName>
    </recommendedName>
</protein>
<sequence length="101" mass="11443">MANVTVTFTITEFCLHTGISEEELNEIVGLGVVEPSEIQETTWVFDDHAAIVVQRAVRLRHELALDWPGIAVALTLMDDIAHLKQENRLLRQRLSRFVAHP</sequence>
<organism>
    <name type="scientific">Escherichia coli O6:K15:H31 (strain 536 / UPEC)</name>
    <dbReference type="NCBI Taxonomy" id="362663"/>
    <lineage>
        <taxon>Bacteria</taxon>
        <taxon>Pseudomonadati</taxon>
        <taxon>Pseudomonadota</taxon>
        <taxon>Gammaproteobacteria</taxon>
        <taxon>Enterobacterales</taxon>
        <taxon>Enterobacteriaceae</taxon>
        <taxon>Escherichia</taxon>
    </lineage>
</organism>
<reference key="1">
    <citation type="journal article" date="2006" name="Mol. Microbiol.">
        <title>Role of pathogenicity island-associated integrases in the genome plasticity of uropathogenic Escherichia coli strain 536.</title>
        <authorList>
            <person name="Hochhut B."/>
            <person name="Wilde C."/>
            <person name="Balling G."/>
            <person name="Middendorf B."/>
            <person name="Dobrindt U."/>
            <person name="Brzuszkiewicz E."/>
            <person name="Gottschalk G."/>
            <person name="Carniel E."/>
            <person name="Hacker J."/>
        </authorList>
    </citation>
    <scope>NUCLEOTIDE SEQUENCE [LARGE SCALE GENOMIC DNA]</scope>
    <source>
        <strain>536 / UPEC</strain>
    </source>
</reference>
<evidence type="ECO:0000255" key="1">
    <source>
        <dbReference type="HAMAP-Rule" id="MF_01155"/>
    </source>
</evidence>
<comment type="function">
    <text evidence="1">Interacts with CbpA and inhibits both the DnaJ-like co-chaperone activity and the DNA binding activity of CbpA. Together with CbpA, modulates the activity of the DnaK chaperone system. Does not inhibit the co-chaperone activity of DnaJ.</text>
</comment>
<comment type="similarity">
    <text evidence="1">Belongs to the CbpM family.</text>
</comment>
<proteinExistence type="inferred from homology"/>
<name>CBPM_ECOL5</name>